<sequence length="474" mass="50548">MHLLQCLLSTISLASTVTAFVPYSFNLEVSTEGPPSNDVARRFVPWKLLLDDSYNNHGSSSNGVSLTLDLKKFPVRRDNKYKVVLADEPTTPNTAALNQEGLDYSYFATVRVGSQGQQMWLVLDTGGPNTWVFGSDCTTVACQRHETFGEAASKSLKLLPLNWAVGYGTGLVSGVLGTDSLSLAGLDVNMTFGLAKNASTDFESYPVDGILGLGRSANSNFNTPSFMETVATQRLLKSNIIGFSFSRNSDGARDGAANFGDLDTTRFTGDIVYTNTTGDSNNWRIPLDDASVNGTPCRFVNKTAVIDTGTSYAMLPPKDATVLHNLIPGAVTTSHGQNFTLPCNSTAVVQVSFSGLSYNISPKDYVGPAYGSACLSTIVGQALYGDDVWLLGDVFLKNVYSVFDYDNHRIGFANRSVPIASPTTTVAAAANPSATDGAGSTLTGSMAVHTGSASIVSRFVHWPFIFALLCMVLV</sequence>
<dbReference type="EC" id="3.4.23.-"/>
<dbReference type="EMBL" id="AAHF01000005">
    <property type="protein sequence ID" value="EAL90084.1"/>
    <property type="molecule type" value="Genomic_DNA"/>
</dbReference>
<dbReference type="RefSeq" id="XP_752122.1">
    <property type="nucleotide sequence ID" value="XM_747029.1"/>
</dbReference>
<dbReference type="SMR" id="Q4WNV0"/>
<dbReference type="STRING" id="330879.Q4WNV0"/>
<dbReference type="MEROPS" id="A01.077"/>
<dbReference type="GlyCosmos" id="Q4WNV0">
    <property type="glycosylation" value="7 sites, No reported glycans"/>
</dbReference>
<dbReference type="EnsemblFungi" id="EAL90084">
    <property type="protein sequence ID" value="EAL90084"/>
    <property type="gene ID" value="AFUA_4G07040"/>
</dbReference>
<dbReference type="GeneID" id="3509768"/>
<dbReference type="KEGG" id="afm:AFUA_4G07040"/>
<dbReference type="VEuPathDB" id="FungiDB:Afu4g07040"/>
<dbReference type="eggNOG" id="KOG1339">
    <property type="taxonomic scope" value="Eukaryota"/>
</dbReference>
<dbReference type="HOGENOM" id="CLU_013253_10_0_1"/>
<dbReference type="InParanoid" id="Q4WNV0"/>
<dbReference type="OMA" id="AASNTWV"/>
<dbReference type="OrthoDB" id="28208at2759"/>
<dbReference type="Proteomes" id="UP000002530">
    <property type="component" value="Chromosome 4"/>
</dbReference>
<dbReference type="GO" id="GO:0005886">
    <property type="term" value="C:plasma membrane"/>
    <property type="evidence" value="ECO:0007669"/>
    <property type="project" value="UniProtKB-SubCell"/>
</dbReference>
<dbReference type="GO" id="GO:0098552">
    <property type="term" value="C:side of membrane"/>
    <property type="evidence" value="ECO:0007669"/>
    <property type="project" value="UniProtKB-KW"/>
</dbReference>
<dbReference type="GO" id="GO:0004190">
    <property type="term" value="F:aspartic-type endopeptidase activity"/>
    <property type="evidence" value="ECO:0000314"/>
    <property type="project" value="AspGD"/>
</dbReference>
<dbReference type="GO" id="GO:0006508">
    <property type="term" value="P:proteolysis"/>
    <property type="evidence" value="ECO:0000318"/>
    <property type="project" value="GO_Central"/>
</dbReference>
<dbReference type="CDD" id="cd05471">
    <property type="entry name" value="pepsin_like"/>
    <property type="match status" value="1"/>
</dbReference>
<dbReference type="FunFam" id="2.40.70.10:FF:000085">
    <property type="entry name" value="Aspartic-type endopeptidase (CtsD), putative"/>
    <property type="match status" value="1"/>
</dbReference>
<dbReference type="FunFam" id="2.40.70.10:FF:000060">
    <property type="entry name" value="Aspartic-type endopeptidase ctsD"/>
    <property type="match status" value="1"/>
</dbReference>
<dbReference type="Gene3D" id="2.40.70.10">
    <property type="entry name" value="Acid Proteases"/>
    <property type="match status" value="2"/>
</dbReference>
<dbReference type="InterPro" id="IPR001461">
    <property type="entry name" value="Aspartic_peptidase_A1"/>
</dbReference>
<dbReference type="InterPro" id="IPR034164">
    <property type="entry name" value="Pepsin-like_dom"/>
</dbReference>
<dbReference type="InterPro" id="IPR033121">
    <property type="entry name" value="PEPTIDASE_A1"/>
</dbReference>
<dbReference type="InterPro" id="IPR021109">
    <property type="entry name" value="Peptidase_aspartic_dom_sf"/>
</dbReference>
<dbReference type="PANTHER" id="PTHR47966">
    <property type="entry name" value="BETA-SITE APP-CLEAVING ENZYME, ISOFORM A-RELATED"/>
    <property type="match status" value="1"/>
</dbReference>
<dbReference type="PANTHER" id="PTHR47966:SF75">
    <property type="entry name" value="ENDOPEPTIDASE (CTSD), PUTATIVE (AFU_ORTHOLOGUE AFUA_4G07040)-RELATED"/>
    <property type="match status" value="1"/>
</dbReference>
<dbReference type="Pfam" id="PF00026">
    <property type="entry name" value="Asp"/>
    <property type="match status" value="1"/>
</dbReference>
<dbReference type="PRINTS" id="PR00792">
    <property type="entry name" value="PEPSIN"/>
</dbReference>
<dbReference type="SUPFAM" id="SSF50630">
    <property type="entry name" value="Acid proteases"/>
    <property type="match status" value="1"/>
</dbReference>
<dbReference type="PROSITE" id="PS51767">
    <property type="entry name" value="PEPTIDASE_A1"/>
    <property type="match status" value="1"/>
</dbReference>
<comment type="function">
    <text evidence="4">Secreted aspartic-type endopeptidase which is secreted and contributes to virulence.</text>
</comment>
<comment type="biophysicochemical properties">
    <phDependence>
        <text evidence="4">Optimum pH is 5.0.</text>
    </phDependence>
</comment>
<comment type="subcellular location">
    <subcellularLocation>
        <location evidence="5">Cell membrane</location>
        <topology evidence="5">Lipid-anchor</topology>
        <topology evidence="5">GPI-anchor</topology>
    </subcellularLocation>
</comment>
<comment type="induction">
    <text evidence="4">Repressed under nutrient-rich culture conditions.</text>
</comment>
<comment type="similarity">
    <text evidence="5">Belongs to the peptidase A1 family.</text>
</comment>
<organism>
    <name type="scientific">Aspergillus fumigatus (strain ATCC MYA-4609 / CBS 101355 / FGSC A1100 / Af293)</name>
    <name type="common">Neosartorya fumigata</name>
    <dbReference type="NCBI Taxonomy" id="330879"/>
    <lineage>
        <taxon>Eukaryota</taxon>
        <taxon>Fungi</taxon>
        <taxon>Dikarya</taxon>
        <taxon>Ascomycota</taxon>
        <taxon>Pezizomycotina</taxon>
        <taxon>Eurotiomycetes</taxon>
        <taxon>Eurotiomycetidae</taxon>
        <taxon>Eurotiales</taxon>
        <taxon>Aspergillaceae</taxon>
        <taxon>Aspergillus</taxon>
        <taxon>Aspergillus subgen. Fumigati</taxon>
    </lineage>
</organism>
<evidence type="ECO:0000250" key="1"/>
<evidence type="ECO:0000255" key="2"/>
<evidence type="ECO:0000255" key="3">
    <source>
        <dbReference type="PROSITE-ProRule" id="PRU01103"/>
    </source>
</evidence>
<evidence type="ECO:0000269" key="4">
    <source>
    </source>
</evidence>
<evidence type="ECO:0000305" key="5"/>
<reference key="1">
    <citation type="journal article" date="2005" name="Nature">
        <title>Genomic sequence of the pathogenic and allergenic filamentous fungus Aspergillus fumigatus.</title>
        <authorList>
            <person name="Nierman W.C."/>
            <person name="Pain A."/>
            <person name="Anderson M.J."/>
            <person name="Wortman J.R."/>
            <person name="Kim H.S."/>
            <person name="Arroyo J."/>
            <person name="Berriman M."/>
            <person name="Abe K."/>
            <person name="Archer D.B."/>
            <person name="Bermejo C."/>
            <person name="Bennett J.W."/>
            <person name="Bowyer P."/>
            <person name="Chen D."/>
            <person name="Collins M."/>
            <person name="Coulsen R."/>
            <person name="Davies R."/>
            <person name="Dyer P.S."/>
            <person name="Farman M.L."/>
            <person name="Fedorova N."/>
            <person name="Fedorova N.D."/>
            <person name="Feldblyum T.V."/>
            <person name="Fischer R."/>
            <person name="Fosker N."/>
            <person name="Fraser A."/>
            <person name="Garcia J.L."/>
            <person name="Garcia M.J."/>
            <person name="Goble A."/>
            <person name="Goldman G.H."/>
            <person name="Gomi K."/>
            <person name="Griffith-Jones S."/>
            <person name="Gwilliam R."/>
            <person name="Haas B.J."/>
            <person name="Haas H."/>
            <person name="Harris D.E."/>
            <person name="Horiuchi H."/>
            <person name="Huang J."/>
            <person name="Humphray S."/>
            <person name="Jimenez J."/>
            <person name="Keller N."/>
            <person name="Khouri H."/>
            <person name="Kitamoto K."/>
            <person name="Kobayashi T."/>
            <person name="Konzack S."/>
            <person name="Kulkarni R."/>
            <person name="Kumagai T."/>
            <person name="Lafton A."/>
            <person name="Latge J.-P."/>
            <person name="Li W."/>
            <person name="Lord A."/>
            <person name="Lu C."/>
            <person name="Majoros W.H."/>
            <person name="May G.S."/>
            <person name="Miller B.L."/>
            <person name="Mohamoud Y."/>
            <person name="Molina M."/>
            <person name="Monod M."/>
            <person name="Mouyna I."/>
            <person name="Mulligan S."/>
            <person name="Murphy L.D."/>
            <person name="O'Neil S."/>
            <person name="Paulsen I."/>
            <person name="Penalva M.A."/>
            <person name="Pertea M."/>
            <person name="Price C."/>
            <person name="Pritchard B.L."/>
            <person name="Quail M.A."/>
            <person name="Rabbinowitsch E."/>
            <person name="Rawlins N."/>
            <person name="Rajandream M.A."/>
            <person name="Reichard U."/>
            <person name="Renauld H."/>
            <person name="Robson G.D."/>
            <person name="Rodriguez de Cordoba S."/>
            <person name="Rodriguez-Pena J.M."/>
            <person name="Ronning C.M."/>
            <person name="Rutter S."/>
            <person name="Salzberg S.L."/>
            <person name="Sanchez M."/>
            <person name="Sanchez-Ferrero J.C."/>
            <person name="Saunders D."/>
            <person name="Seeger K."/>
            <person name="Squares R."/>
            <person name="Squares S."/>
            <person name="Takeuchi M."/>
            <person name="Tekaia F."/>
            <person name="Turner G."/>
            <person name="Vazquez de Aldana C.R."/>
            <person name="Weidman J."/>
            <person name="White O."/>
            <person name="Woodward J.R."/>
            <person name="Yu J.-H."/>
            <person name="Fraser C.M."/>
            <person name="Galagan J.E."/>
            <person name="Asai K."/>
            <person name="Machida M."/>
            <person name="Hall N."/>
            <person name="Barrell B.G."/>
            <person name="Denning D.W."/>
        </authorList>
    </citation>
    <scope>NUCLEOTIDE SEQUENCE [LARGE SCALE GENOMIC DNA]</scope>
    <source>
        <strain>ATCC MYA-4609 / CBS 101355 / FGSC A1100 / Af293</strain>
    </source>
</reference>
<reference key="2">
    <citation type="journal article" date="2007" name="Protein Expr. Purif.">
        <title>Isolation, activity and immunological characterisation of a secreted aspartic protease, CtsD, from Aspergillus fumigatus.</title>
        <authorList>
            <person name="Vickers I."/>
            <person name="Reeves E.P."/>
            <person name="Kavanagh K.A."/>
            <person name="Doyle S."/>
        </authorList>
    </citation>
    <scope>FUNCTION</scope>
    <scope>BIOPHYSICOCHEMICAL PROPERTIES</scope>
    <scope>INDUCTION</scope>
    <scope>SUBCELLULAR LOCATION</scope>
</reference>
<proteinExistence type="evidence at protein level"/>
<protein>
    <recommendedName>
        <fullName>Aspartic-type endopeptidase ctsD</fullName>
        <ecNumber>3.4.23.-</ecNumber>
    </recommendedName>
</protein>
<gene>
    <name type="primary">ctsD</name>
    <name type="ORF">AFUA_4G07040</name>
</gene>
<keyword id="KW-0064">Aspartyl protease</keyword>
<keyword id="KW-1003">Cell membrane</keyword>
<keyword id="KW-0325">Glycoprotein</keyword>
<keyword id="KW-0336">GPI-anchor</keyword>
<keyword id="KW-0378">Hydrolase</keyword>
<keyword id="KW-0449">Lipoprotein</keyword>
<keyword id="KW-0472">Membrane</keyword>
<keyword id="KW-0645">Protease</keyword>
<keyword id="KW-1185">Reference proteome</keyword>
<keyword id="KW-0732">Signal</keyword>
<keyword id="KW-0843">Virulence</keyword>
<name>CTSD_ASPFU</name>
<feature type="signal peptide" evidence="2">
    <location>
        <begin position="1"/>
        <end position="19"/>
    </location>
</feature>
<feature type="chain" id="PRO_0000390764" description="Aspartic-type endopeptidase ctsD">
    <location>
        <begin position="20"/>
        <end position="452"/>
    </location>
</feature>
<feature type="propeptide" id="PRO_0000390765" description="Removed in mature form" evidence="2">
    <location>
        <begin position="453"/>
        <end position="474"/>
    </location>
</feature>
<feature type="domain" description="Peptidase A1" evidence="3">
    <location>
        <begin position="106"/>
        <end position="413"/>
    </location>
</feature>
<feature type="active site" evidence="1">
    <location>
        <position position="124"/>
    </location>
</feature>
<feature type="active site" evidence="1">
    <location>
        <position position="307"/>
    </location>
</feature>
<feature type="lipid moiety-binding region" description="GPI-anchor amidated serine" evidence="2">
    <location>
        <position position="452"/>
    </location>
</feature>
<feature type="glycosylation site" description="N-linked (GlcNAc...) asparagine" evidence="2">
    <location>
        <position position="189"/>
    </location>
</feature>
<feature type="glycosylation site" description="N-linked (GlcNAc...) asparagine" evidence="2">
    <location>
        <position position="197"/>
    </location>
</feature>
<feature type="glycosylation site" description="N-linked (GlcNAc...) asparagine" evidence="2">
    <location>
        <position position="275"/>
    </location>
</feature>
<feature type="glycosylation site" description="N-linked (GlcNAc...) asparagine" evidence="2">
    <location>
        <position position="301"/>
    </location>
</feature>
<feature type="glycosylation site" description="N-linked (GlcNAc...) asparagine" evidence="2">
    <location>
        <position position="338"/>
    </location>
</feature>
<feature type="glycosylation site" description="N-linked (GlcNAc...) asparagine" evidence="2">
    <location>
        <position position="344"/>
    </location>
</feature>
<feature type="glycosylation site" description="N-linked (GlcNAc...) asparagine" evidence="2">
    <location>
        <position position="414"/>
    </location>
</feature>
<accession>Q4WNV0</accession>